<dbReference type="EMBL" id="M77837">
    <property type="protein sequence ID" value="AAA22591.1"/>
    <property type="molecule type" value="Genomic_DNA"/>
</dbReference>
<dbReference type="EMBL" id="D26185">
    <property type="protein sequence ID" value="BAA05192.1"/>
    <property type="molecule type" value="Genomic_DNA"/>
</dbReference>
<dbReference type="EMBL" id="AL009126">
    <property type="protein sequence ID" value="CAB16098.1"/>
    <property type="molecule type" value="Genomic_DNA"/>
</dbReference>
<dbReference type="PIR" id="E41666">
    <property type="entry name" value="E41666"/>
</dbReference>
<dbReference type="RefSeq" id="NP_391941.1">
    <property type="nucleotide sequence ID" value="NC_000964.3"/>
</dbReference>
<dbReference type="RefSeq" id="WP_003243304.1">
    <property type="nucleotide sequence ID" value="NZ_OZ025638.1"/>
</dbReference>
<dbReference type="FunCoup" id="P37493">
    <property type="interactions" value="6"/>
</dbReference>
<dbReference type="STRING" id="224308.BSU40610"/>
<dbReference type="TCDB" id="3.A.1.158.1">
    <property type="family name" value="the atp-binding cassette (abc) superfamily"/>
</dbReference>
<dbReference type="PaxDb" id="224308-BSU40610"/>
<dbReference type="EnsemblBacteria" id="CAB16098">
    <property type="protein sequence ID" value="CAB16098"/>
    <property type="gene ID" value="BSU_40610"/>
</dbReference>
<dbReference type="GeneID" id="938116"/>
<dbReference type="KEGG" id="bsu:BSU40610"/>
<dbReference type="PATRIC" id="fig|224308.179.peg.4403"/>
<dbReference type="eggNOG" id="ENOG50335X6">
    <property type="taxonomic scope" value="Bacteria"/>
</dbReference>
<dbReference type="InParanoid" id="P37493"/>
<dbReference type="OrthoDB" id="2935474at2"/>
<dbReference type="BioCyc" id="BSUB:BSU40610-MONOMER"/>
<dbReference type="Proteomes" id="UP000001570">
    <property type="component" value="Chromosome"/>
</dbReference>
<dbReference type="InterPro" id="IPR024295">
    <property type="entry name" value="DUF2705"/>
</dbReference>
<dbReference type="Pfam" id="PF10920">
    <property type="entry name" value="DUF2705"/>
    <property type="match status" value="1"/>
</dbReference>
<proteinExistence type="predicted"/>
<name>YYBK_BACSU</name>
<gene>
    <name type="primary">yybK</name>
    <name type="ordered locus">BSU40610</name>
</gene>
<organism>
    <name type="scientific">Bacillus subtilis (strain 168)</name>
    <dbReference type="NCBI Taxonomy" id="224308"/>
    <lineage>
        <taxon>Bacteria</taxon>
        <taxon>Bacillati</taxon>
        <taxon>Bacillota</taxon>
        <taxon>Bacilli</taxon>
        <taxon>Bacillales</taxon>
        <taxon>Bacillaceae</taxon>
        <taxon>Bacillus</taxon>
    </lineage>
</organism>
<reference key="1">
    <citation type="journal article" date="1991" name="J. Bacteriol.">
        <title>In vitro type II binding of chromosomal DNA to membrane in Bacillus subtilis.</title>
        <authorList>
            <person name="Sato Y."/>
            <person name="McCollum M."/>
            <person name="McKenzie T."/>
            <person name="Laffan J."/>
            <person name="Zuberi A."/>
            <person name="Sueoka N."/>
        </authorList>
    </citation>
    <scope>NUCLEOTIDE SEQUENCE [GENOMIC DNA]</scope>
    <source>
        <strain>168</strain>
    </source>
</reference>
<reference key="2">
    <citation type="journal article" date="1994" name="DNA Res.">
        <title>Systematic sequencing of the 180 kilobase region of the Bacillus subtilis chromosome containing the replication origin.</title>
        <authorList>
            <person name="Ogasawara N."/>
            <person name="Nakai S."/>
            <person name="Yoshikawa H."/>
        </authorList>
    </citation>
    <scope>NUCLEOTIDE SEQUENCE [GENOMIC DNA]</scope>
    <source>
        <strain>168</strain>
    </source>
</reference>
<reference key="3">
    <citation type="journal article" date="1997" name="Nature">
        <title>The complete genome sequence of the Gram-positive bacterium Bacillus subtilis.</title>
        <authorList>
            <person name="Kunst F."/>
            <person name="Ogasawara N."/>
            <person name="Moszer I."/>
            <person name="Albertini A.M."/>
            <person name="Alloni G."/>
            <person name="Azevedo V."/>
            <person name="Bertero M.G."/>
            <person name="Bessieres P."/>
            <person name="Bolotin A."/>
            <person name="Borchert S."/>
            <person name="Borriss R."/>
            <person name="Boursier L."/>
            <person name="Brans A."/>
            <person name="Braun M."/>
            <person name="Brignell S.C."/>
            <person name="Bron S."/>
            <person name="Brouillet S."/>
            <person name="Bruschi C.V."/>
            <person name="Caldwell B."/>
            <person name="Capuano V."/>
            <person name="Carter N.M."/>
            <person name="Choi S.-K."/>
            <person name="Codani J.-J."/>
            <person name="Connerton I.F."/>
            <person name="Cummings N.J."/>
            <person name="Daniel R.A."/>
            <person name="Denizot F."/>
            <person name="Devine K.M."/>
            <person name="Duesterhoeft A."/>
            <person name="Ehrlich S.D."/>
            <person name="Emmerson P.T."/>
            <person name="Entian K.-D."/>
            <person name="Errington J."/>
            <person name="Fabret C."/>
            <person name="Ferrari E."/>
            <person name="Foulger D."/>
            <person name="Fritz C."/>
            <person name="Fujita M."/>
            <person name="Fujita Y."/>
            <person name="Fuma S."/>
            <person name="Galizzi A."/>
            <person name="Galleron N."/>
            <person name="Ghim S.-Y."/>
            <person name="Glaser P."/>
            <person name="Goffeau A."/>
            <person name="Golightly E.J."/>
            <person name="Grandi G."/>
            <person name="Guiseppi G."/>
            <person name="Guy B.J."/>
            <person name="Haga K."/>
            <person name="Haiech J."/>
            <person name="Harwood C.R."/>
            <person name="Henaut A."/>
            <person name="Hilbert H."/>
            <person name="Holsappel S."/>
            <person name="Hosono S."/>
            <person name="Hullo M.-F."/>
            <person name="Itaya M."/>
            <person name="Jones L.-M."/>
            <person name="Joris B."/>
            <person name="Karamata D."/>
            <person name="Kasahara Y."/>
            <person name="Klaerr-Blanchard M."/>
            <person name="Klein C."/>
            <person name="Kobayashi Y."/>
            <person name="Koetter P."/>
            <person name="Koningstein G."/>
            <person name="Krogh S."/>
            <person name="Kumano M."/>
            <person name="Kurita K."/>
            <person name="Lapidus A."/>
            <person name="Lardinois S."/>
            <person name="Lauber J."/>
            <person name="Lazarevic V."/>
            <person name="Lee S.-M."/>
            <person name="Levine A."/>
            <person name="Liu H."/>
            <person name="Masuda S."/>
            <person name="Mauel C."/>
            <person name="Medigue C."/>
            <person name="Medina N."/>
            <person name="Mellado R.P."/>
            <person name="Mizuno M."/>
            <person name="Moestl D."/>
            <person name="Nakai S."/>
            <person name="Noback M."/>
            <person name="Noone D."/>
            <person name="O'Reilly M."/>
            <person name="Ogawa K."/>
            <person name="Ogiwara A."/>
            <person name="Oudega B."/>
            <person name="Park S.-H."/>
            <person name="Parro V."/>
            <person name="Pohl T.M."/>
            <person name="Portetelle D."/>
            <person name="Porwollik S."/>
            <person name="Prescott A.M."/>
            <person name="Presecan E."/>
            <person name="Pujic P."/>
            <person name="Purnelle B."/>
            <person name="Rapoport G."/>
            <person name="Rey M."/>
            <person name="Reynolds S."/>
            <person name="Rieger M."/>
            <person name="Rivolta C."/>
            <person name="Rocha E."/>
            <person name="Roche B."/>
            <person name="Rose M."/>
            <person name="Sadaie Y."/>
            <person name="Sato T."/>
            <person name="Scanlan E."/>
            <person name="Schleich S."/>
            <person name="Schroeter R."/>
            <person name="Scoffone F."/>
            <person name="Sekiguchi J."/>
            <person name="Sekowska A."/>
            <person name="Seror S.J."/>
            <person name="Serror P."/>
            <person name="Shin B.-S."/>
            <person name="Soldo B."/>
            <person name="Sorokin A."/>
            <person name="Tacconi E."/>
            <person name="Takagi T."/>
            <person name="Takahashi H."/>
            <person name="Takemaru K."/>
            <person name="Takeuchi M."/>
            <person name="Tamakoshi A."/>
            <person name="Tanaka T."/>
            <person name="Terpstra P."/>
            <person name="Tognoni A."/>
            <person name="Tosato V."/>
            <person name="Uchiyama S."/>
            <person name="Vandenbol M."/>
            <person name="Vannier F."/>
            <person name="Vassarotti A."/>
            <person name="Viari A."/>
            <person name="Wambutt R."/>
            <person name="Wedler E."/>
            <person name="Wedler H."/>
            <person name="Weitzenegger T."/>
            <person name="Winters P."/>
            <person name="Wipat A."/>
            <person name="Yamamoto H."/>
            <person name="Yamane K."/>
            <person name="Yasumoto K."/>
            <person name="Yata K."/>
            <person name="Yoshida K."/>
            <person name="Yoshikawa H.-F."/>
            <person name="Zumstein E."/>
            <person name="Yoshikawa H."/>
            <person name="Danchin A."/>
        </authorList>
    </citation>
    <scope>NUCLEOTIDE SEQUENCE [LARGE SCALE GENOMIC DNA]</scope>
    <source>
        <strain>168</strain>
    </source>
</reference>
<accession>P37493</accession>
<protein>
    <recommendedName>
        <fullName>Uncharacterized protein YybK</fullName>
    </recommendedName>
</protein>
<feature type="chain" id="PRO_0000050066" description="Uncharacterized protein YybK">
    <location>
        <begin position="1"/>
        <end position="251"/>
    </location>
</feature>
<sequence length="251" mass="29014">MRIKGFFITLVAIIFQASLSSYNNNKNVFPFLDGIPISTSGHYEYQNILLWFVPIVSLSFCFSGSIRDTYISYEQLKLVREHSRVKWVTSQFLIITVVLLIFTLSQIAIFYIYSLVSLHNLDINSVINKRFVMMTLMYYLTLLNLFSFQLFMELYYKSQIAQLNISVYIIFSLILAKKLVQLNSPKVIHYFLIPNYSNGLRTGLSYYSQSGTAIIEPLLGLFIIIILQISIVILSVLKFKKIDMLKSEGLQ</sequence>
<keyword id="KW-1185">Reference proteome</keyword>